<proteinExistence type="inferred from homology"/>
<dbReference type="EMBL" id="CP000419">
    <property type="protein sequence ID" value="ABJ65647.1"/>
    <property type="molecule type" value="Genomic_DNA"/>
</dbReference>
<dbReference type="RefSeq" id="WP_011680729.1">
    <property type="nucleotide sequence ID" value="NC_008532.1"/>
</dbReference>
<dbReference type="SMR" id="Q03MC5"/>
<dbReference type="KEGG" id="ste:STER_0344"/>
<dbReference type="HOGENOM" id="CLU_044581_0_0_9"/>
<dbReference type="GO" id="GO:0005886">
    <property type="term" value="C:plasma membrane"/>
    <property type="evidence" value="ECO:0007669"/>
    <property type="project" value="UniProtKB-SubCell"/>
</dbReference>
<dbReference type="GO" id="GO:0005295">
    <property type="term" value="F:neutral L-amino acid:sodium symporter activity"/>
    <property type="evidence" value="ECO:0007669"/>
    <property type="project" value="TreeGrafter"/>
</dbReference>
<dbReference type="GO" id="GO:0032329">
    <property type="term" value="P:serine transport"/>
    <property type="evidence" value="ECO:0007669"/>
    <property type="project" value="InterPro"/>
</dbReference>
<dbReference type="GO" id="GO:0015826">
    <property type="term" value="P:threonine transport"/>
    <property type="evidence" value="ECO:0007669"/>
    <property type="project" value="InterPro"/>
</dbReference>
<dbReference type="FunFam" id="1.10.3860.10:FF:000003">
    <property type="entry name" value="Serine/threonine transporter sstT"/>
    <property type="match status" value="1"/>
</dbReference>
<dbReference type="Gene3D" id="1.10.3860.10">
    <property type="entry name" value="Sodium:dicarboxylate symporter"/>
    <property type="match status" value="1"/>
</dbReference>
<dbReference type="HAMAP" id="MF_01582">
    <property type="entry name" value="Ser_Thr_transp_SstT"/>
    <property type="match status" value="1"/>
</dbReference>
<dbReference type="InterPro" id="IPR001991">
    <property type="entry name" value="Na-dicarboxylate_symporter"/>
</dbReference>
<dbReference type="InterPro" id="IPR036458">
    <property type="entry name" value="Na:dicarbo_symporter_sf"/>
</dbReference>
<dbReference type="InterPro" id="IPR023025">
    <property type="entry name" value="Ser_Thr_transp_SstT"/>
</dbReference>
<dbReference type="NCBIfam" id="NF010151">
    <property type="entry name" value="PRK13628.1"/>
    <property type="match status" value="1"/>
</dbReference>
<dbReference type="PANTHER" id="PTHR42865">
    <property type="entry name" value="PROTON/GLUTAMATE-ASPARTATE SYMPORTER"/>
    <property type="match status" value="1"/>
</dbReference>
<dbReference type="PANTHER" id="PTHR42865:SF8">
    <property type="entry name" value="SERINE_THREONINE TRANSPORTER SSTT"/>
    <property type="match status" value="1"/>
</dbReference>
<dbReference type="Pfam" id="PF00375">
    <property type="entry name" value="SDF"/>
    <property type="match status" value="1"/>
</dbReference>
<dbReference type="PRINTS" id="PR00173">
    <property type="entry name" value="EDTRNSPORT"/>
</dbReference>
<dbReference type="SUPFAM" id="SSF118215">
    <property type="entry name" value="Proton glutamate symport protein"/>
    <property type="match status" value="1"/>
</dbReference>
<sequence length="402" mass="42179">MKRFISAWNRTSLIKRIAIGVVIGAILGLLIPKITVIGLLGDMFVGGLKAIAPLLVSALVANALSQTREGQQSNMKTVIVLYLFGTFAAALTAVISHYIFPISLKLGAASATKAAAPQGIGEVFKDLMLKMVDNPINALSQANYIGVLVWAVVFGFAMRTASEHTKELLHTLAEVTSQIVRWIINLAPFGILGLVFDTISKNGVGVLADYGVLILVLVGTMTFVALVINPIIAFVMMGKNPFPLVFRCLKDSGITAFFTRSSAANIPVNLQLCEDLGLNPDTYLVSIPLGSTINMAGAAVTINVLTLAAVTTLGIEVDFATAFILSVVSTISACGASGIAGGSLLLVPVACSLFGISNDLAMQVVGVGFIVGVIQDSCETALNSSTDVLFTAVAEKSRWKKS</sequence>
<gene>
    <name evidence="1" type="primary">sstT</name>
    <name type="ordered locus">STER_0344</name>
</gene>
<accession>Q03MC5</accession>
<keyword id="KW-0029">Amino-acid transport</keyword>
<keyword id="KW-1003">Cell membrane</keyword>
<keyword id="KW-0472">Membrane</keyword>
<keyword id="KW-0769">Symport</keyword>
<keyword id="KW-0812">Transmembrane</keyword>
<keyword id="KW-1133">Transmembrane helix</keyword>
<keyword id="KW-0813">Transport</keyword>
<evidence type="ECO:0000255" key="1">
    <source>
        <dbReference type="HAMAP-Rule" id="MF_01582"/>
    </source>
</evidence>
<reference key="1">
    <citation type="journal article" date="2006" name="Proc. Natl. Acad. Sci. U.S.A.">
        <title>Comparative genomics of the lactic acid bacteria.</title>
        <authorList>
            <person name="Makarova K.S."/>
            <person name="Slesarev A."/>
            <person name="Wolf Y.I."/>
            <person name="Sorokin A."/>
            <person name="Mirkin B."/>
            <person name="Koonin E.V."/>
            <person name="Pavlov A."/>
            <person name="Pavlova N."/>
            <person name="Karamychev V."/>
            <person name="Polouchine N."/>
            <person name="Shakhova V."/>
            <person name="Grigoriev I."/>
            <person name="Lou Y."/>
            <person name="Rohksar D."/>
            <person name="Lucas S."/>
            <person name="Huang K."/>
            <person name="Goodstein D.M."/>
            <person name="Hawkins T."/>
            <person name="Plengvidhya V."/>
            <person name="Welker D."/>
            <person name="Hughes J."/>
            <person name="Goh Y."/>
            <person name="Benson A."/>
            <person name="Baldwin K."/>
            <person name="Lee J.-H."/>
            <person name="Diaz-Muniz I."/>
            <person name="Dosti B."/>
            <person name="Smeianov V."/>
            <person name="Wechter W."/>
            <person name="Barabote R."/>
            <person name="Lorca G."/>
            <person name="Altermann E."/>
            <person name="Barrangou R."/>
            <person name="Ganesan B."/>
            <person name="Xie Y."/>
            <person name="Rawsthorne H."/>
            <person name="Tamir D."/>
            <person name="Parker C."/>
            <person name="Breidt F."/>
            <person name="Broadbent J.R."/>
            <person name="Hutkins R."/>
            <person name="O'Sullivan D."/>
            <person name="Steele J."/>
            <person name="Unlu G."/>
            <person name="Saier M.H. Jr."/>
            <person name="Klaenhammer T."/>
            <person name="Richardson P."/>
            <person name="Kozyavkin S."/>
            <person name="Weimer B.C."/>
            <person name="Mills D.A."/>
        </authorList>
    </citation>
    <scope>NUCLEOTIDE SEQUENCE [LARGE SCALE GENOMIC DNA]</scope>
    <source>
        <strain>ATCC BAA-491 / LMD-9</strain>
    </source>
</reference>
<name>SSTT_STRTD</name>
<feature type="chain" id="PRO_0000309150" description="Serine/threonine transporter SstT">
    <location>
        <begin position="1"/>
        <end position="402"/>
    </location>
</feature>
<feature type="transmembrane region" description="Helical" evidence="1">
    <location>
        <begin position="17"/>
        <end position="37"/>
    </location>
</feature>
<feature type="transmembrane region" description="Helical" evidence="1">
    <location>
        <begin position="44"/>
        <end position="64"/>
    </location>
</feature>
<feature type="transmembrane region" description="Helical" evidence="1">
    <location>
        <begin position="79"/>
        <end position="99"/>
    </location>
</feature>
<feature type="transmembrane region" description="Helical" evidence="1">
    <location>
        <begin position="138"/>
        <end position="158"/>
    </location>
</feature>
<feature type="transmembrane region" description="Helical" evidence="1">
    <location>
        <begin position="179"/>
        <end position="199"/>
    </location>
</feature>
<feature type="transmembrane region" description="Helical" evidence="1">
    <location>
        <begin position="212"/>
        <end position="232"/>
    </location>
</feature>
<feature type="transmembrane region" description="Helical" evidence="1">
    <location>
        <begin position="295"/>
        <end position="315"/>
    </location>
</feature>
<feature type="transmembrane region" description="Helical" evidence="1">
    <location>
        <begin position="336"/>
        <end position="356"/>
    </location>
</feature>
<comment type="function">
    <text evidence="1">Involved in the import of serine and threonine into the cell, with the concomitant import of sodium (symport system).</text>
</comment>
<comment type="catalytic activity">
    <reaction evidence="1">
        <text>L-serine(in) + Na(+)(in) = L-serine(out) + Na(+)(out)</text>
        <dbReference type="Rhea" id="RHEA:29575"/>
        <dbReference type="ChEBI" id="CHEBI:29101"/>
        <dbReference type="ChEBI" id="CHEBI:33384"/>
    </reaction>
    <physiologicalReaction direction="right-to-left" evidence="1">
        <dbReference type="Rhea" id="RHEA:29577"/>
    </physiologicalReaction>
</comment>
<comment type="catalytic activity">
    <reaction evidence="1">
        <text>L-threonine(in) + Na(+)(in) = L-threonine(out) + Na(+)(out)</text>
        <dbReference type="Rhea" id="RHEA:69999"/>
        <dbReference type="ChEBI" id="CHEBI:29101"/>
        <dbReference type="ChEBI" id="CHEBI:57926"/>
    </reaction>
    <physiologicalReaction direction="right-to-left" evidence="1">
        <dbReference type="Rhea" id="RHEA:70001"/>
    </physiologicalReaction>
</comment>
<comment type="subcellular location">
    <subcellularLocation>
        <location evidence="1">Cell membrane</location>
        <topology evidence="1">Multi-pass membrane protein</topology>
    </subcellularLocation>
</comment>
<comment type="similarity">
    <text evidence="1">Belongs to the dicarboxylate/amino acid:cation symporter (DAACS) (TC 2.A.23) family.</text>
</comment>
<protein>
    <recommendedName>
        <fullName evidence="1">Serine/threonine transporter SstT</fullName>
    </recommendedName>
    <alternativeName>
        <fullName evidence="1">Na(+)/serine-threonine symporter</fullName>
    </alternativeName>
</protein>
<organism>
    <name type="scientific">Streptococcus thermophilus (strain ATCC BAA-491 / LMD-9)</name>
    <dbReference type="NCBI Taxonomy" id="322159"/>
    <lineage>
        <taxon>Bacteria</taxon>
        <taxon>Bacillati</taxon>
        <taxon>Bacillota</taxon>
        <taxon>Bacilli</taxon>
        <taxon>Lactobacillales</taxon>
        <taxon>Streptococcaceae</taxon>
        <taxon>Streptococcus</taxon>
    </lineage>
</organism>